<proteinExistence type="evidence at protein level"/>
<organism>
    <name type="scientific">Human herpesvirus 8 type P (isolate GK18)</name>
    <name type="common">HHV-8</name>
    <name type="synonym">Kaposi's sarcoma-associated herpesvirus</name>
    <dbReference type="NCBI Taxonomy" id="868565"/>
    <lineage>
        <taxon>Viruses</taxon>
        <taxon>Duplodnaviria</taxon>
        <taxon>Heunggongvirae</taxon>
        <taxon>Peploviricota</taxon>
        <taxon>Herviviricetes</taxon>
        <taxon>Herpesvirales</taxon>
        <taxon>Orthoherpesviridae</taxon>
        <taxon>Gammaherpesvirinae</taxon>
        <taxon>Rhadinovirus</taxon>
        <taxon>Rhadinovirus humangamma8</taxon>
        <taxon>Human herpesvirus 8</taxon>
    </lineage>
</organism>
<feature type="chain" id="PRO_0000423909" description="Viral FLICE protein">
    <location>
        <begin position="1"/>
        <end position="188"/>
    </location>
</feature>
<feature type="domain" description="DED 1" evidence="1">
    <location>
        <begin position="2"/>
        <end position="74"/>
    </location>
</feature>
<feature type="domain" description="DED 2" evidence="1">
    <location>
        <begin position="93"/>
        <end position="169"/>
    </location>
</feature>
<feature type="helix" evidence="5">
    <location>
        <begin position="4"/>
        <end position="12"/>
    </location>
</feature>
<feature type="helix" evidence="5">
    <location>
        <begin position="16"/>
        <end position="25"/>
    </location>
</feature>
<feature type="helix" evidence="5">
    <location>
        <begin position="35"/>
        <end position="47"/>
    </location>
</feature>
<feature type="helix" evidence="5">
    <location>
        <begin position="53"/>
        <end position="63"/>
    </location>
</feature>
<feature type="helix" evidence="5">
    <location>
        <begin position="66"/>
        <end position="71"/>
    </location>
</feature>
<feature type="helix" evidence="5">
    <location>
        <begin position="77"/>
        <end position="83"/>
    </location>
</feature>
<feature type="turn" evidence="5">
    <location>
        <begin position="84"/>
        <end position="86"/>
    </location>
</feature>
<feature type="helix" evidence="5">
    <location>
        <begin position="93"/>
        <end position="104"/>
    </location>
</feature>
<feature type="helix" evidence="5">
    <location>
        <begin position="107"/>
        <end position="117"/>
    </location>
</feature>
<feature type="helix" evidence="5">
    <location>
        <begin position="118"/>
        <end position="120"/>
    </location>
</feature>
<feature type="helix" evidence="5">
    <location>
        <begin position="130"/>
        <end position="139"/>
    </location>
</feature>
<feature type="helix" evidence="5">
    <location>
        <begin position="149"/>
        <end position="156"/>
    </location>
</feature>
<feature type="turn" evidence="5">
    <location>
        <begin position="157"/>
        <end position="159"/>
    </location>
</feature>
<feature type="helix" evidence="5">
    <location>
        <begin position="161"/>
        <end position="170"/>
    </location>
</feature>
<accession>F5HEZ4</accession>
<keyword id="KW-0002">3D-structure</keyword>
<keyword id="KW-1074">Activation of host NF-kappa-B by virus</keyword>
<keyword id="KW-0053">Apoptosis</keyword>
<keyword id="KW-0945">Host-virus interaction</keyword>
<keyword id="KW-1082">Inhibition of host apoptosis by viral FLIP-like protein</keyword>
<keyword id="KW-1119">Modulation of host cell apoptosis by virus</keyword>
<keyword id="KW-1185">Reference proteome</keyword>
<keyword id="KW-0677">Repeat</keyword>
<organismHost>
    <name type="scientific">Homo sapiens</name>
    <name type="common">Human</name>
    <dbReference type="NCBI Taxonomy" id="9606"/>
</organismHost>
<dbReference type="EMBL" id="AF148805">
    <property type="protein sequence ID" value="AAD46498.1"/>
    <property type="molecule type" value="Genomic_DNA"/>
</dbReference>
<dbReference type="RefSeq" id="YP_001129429.1">
    <property type="nucleotide sequence ID" value="NC_009333.1"/>
</dbReference>
<dbReference type="PDB" id="5LDE">
    <property type="method" value="X-ray"/>
    <property type="resolution" value="3.38 A"/>
    <property type="chains" value="A/B=1-188"/>
</dbReference>
<dbReference type="PDB" id="7PDJ">
    <property type="method" value="X-ray"/>
    <property type="resolution" value="4.20 A"/>
    <property type="chains" value="A/B/C/D/E/F=1-188"/>
</dbReference>
<dbReference type="PDBsum" id="5LDE"/>
<dbReference type="PDBsum" id="7PDJ"/>
<dbReference type="SMR" id="F5HEZ4"/>
<dbReference type="BioGRID" id="1776997">
    <property type="interactions" value="11"/>
</dbReference>
<dbReference type="KEGG" id="vg:4961494"/>
<dbReference type="Proteomes" id="UP000000942">
    <property type="component" value="Segment"/>
</dbReference>
<dbReference type="GO" id="GO:0042981">
    <property type="term" value="P:regulation of apoptotic process"/>
    <property type="evidence" value="ECO:0007669"/>
    <property type="project" value="InterPro"/>
</dbReference>
<dbReference type="GO" id="GO:0085033">
    <property type="term" value="P:symbiont-mediated activation of host NF-kappaB cascade"/>
    <property type="evidence" value="ECO:0007669"/>
    <property type="project" value="UniProtKB-KW"/>
</dbReference>
<dbReference type="GO" id="GO:0052150">
    <property type="term" value="P:symbiont-mediated perturbation of host apoptosis"/>
    <property type="evidence" value="ECO:0007669"/>
    <property type="project" value="UniProtKB-KW"/>
</dbReference>
<dbReference type="CDD" id="cd08776">
    <property type="entry name" value="DED_Caspase-like_r1"/>
    <property type="match status" value="1"/>
</dbReference>
<dbReference type="CDD" id="cd08775">
    <property type="entry name" value="DED_Caspase-like_r2"/>
    <property type="match status" value="1"/>
</dbReference>
<dbReference type="Gene3D" id="1.10.533.10">
    <property type="entry name" value="Death Domain, Fas"/>
    <property type="match status" value="2"/>
</dbReference>
<dbReference type="InterPro" id="IPR011029">
    <property type="entry name" value="DEATH-like_dom_sf"/>
</dbReference>
<dbReference type="InterPro" id="IPR001875">
    <property type="entry name" value="DED_dom"/>
</dbReference>
<dbReference type="PANTHER" id="PTHR48169:SF3">
    <property type="entry name" value="CASP8 AND FADD LIKE APOPTOSIS REGULATOR"/>
    <property type="match status" value="1"/>
</dbReference>
<dbReference type="PANTHER" id="PTHR48169">
    <property type="entry name" value="DED DOMAIN-CONTAINING PROTEIN"/>
    <property type="match status" value="1"/>
</dbReference>
<dbReference type="Pfam" id="PF01335">
    <property type="entry name" value="DED"/>
    <property type="match status" value="1"/>
</dbReference>
<dbReference type="SMART" id="SM00031">
    <property type="entry name" value="DED"/>
    <property type="match status" value="2"/>
</dbReference>
<dbReference type="SUPFAM" id="SSF47986">
    <property type="entry name" value="DEATH domain"/>
    <property type="match status" value="1"/>
</dbReference>
<dbReference type="PROSITE" id="PS50168">
    <property type="entry name" value="DED"/>
    <property type="match status" value="2"/>
</dbReference>
<protein>
    <recommendedName>
        <fullName>Viral FLICE protein</fullName>
        <shortName>vFLIP</shortName>
    </recommendedName>
</protein>
<reference key="1">
    <citation type="journal article" date="1999" name="J. Virol.">
        <title>Identification of a spliced gene from Kaposi's sarcoma-associated herpesvirus encoding a protein with similarities to latent membrane proteins 1 and 2A of Epstein-Barr virus.</title>
        <authorList>
            <person name="Glenn M."/>
            <person name="Rainbow L."/>
            <person name="Aurade F."/>
            <person name="Davison A."/>
            <person name="Schulz T.F."/>
        </authorList>
    </citation>
    <scope>NUCLEOTIDE SEQUENCE [LARGE SCALE GENOMIC DNA]</scope>
</reference>
<reference key="2">
    <citation type="journal article" date="2006" name="J. Gen. Virol.">
        <title>Kaposi's sarcoma-associated herpesvirus immune modulation: an overview.</title>
        <authorList>
            <person name="Rezaee S.A.R."/>
            <person name="Cunningham C."/>
            <person name="Davison A.J."/>
            <person name="Blackbourn D.J."/>
        </authorList>
    </citation>
    <scope>NUCLEOTIDE SEQUENCE [LARGE SCALE GENOMIC DNA]</scope>
</reference>
<reference key="3">
    <citation type="journal article" date="1999" name="Oncogene">
        <title>Modulation of the NF-kappa B pathway by virally encoded death effector domains-containing proteins.</title>
        <authorList>
            <person name="Chaudhary P.M."/>
            <person name="Jasmin A."/>
            <person name="Eby M.T."/>
            <person name="Hood L."/>
        </authorList>
    </citation>
    <scope>FUNCTION</scope>
    <scope>INTERACTION WITH HOST TRAF2; MAP3K14; IKBKB AND RIPK1</scope>
</reference>
<reference key="4">
    <citation type="journal article" date="2006" name="EMBO Rep.">
        <title>The KSHV oncoprotein vFLIP contains a TRAF-interacting motif and requires TRAF2 and TRAF3 for signalling.</title>
        <authorList>
            <person name="Guasparri I."/>
            <person name="Wu H."/>
            <person name="Cesarman E."/>
        </authorList>
    </citation>
    <scope>FUNCTION</scope>
    <scope>INTERACTION WITH HOST TRAF2 AND IKBKG</scope>
</reference>
<reference key="5">
    <citation type="journal article" date="2018" name="PLoS Pathog.">
        <title>CADM1 is essential for KSHV-encoded vGPCR-and vFLIP-mediated chronic NF-kappaB activation.</title>
        <authorList>
            <person name="Hunte R."/>
            <person name="Alonso P."/>
            <person name="Thomas R."/>
            <person name="Bazile C.A."/>
            <person name="Ramos J.C."/>
            <person name="van der Weyden L."/>
            <person name="Dominguez-Bendala J."/>
            <person name="Khan W.N."/>
            <person name="Shembade N."/>
        </authorList>
    </citation>
    <scope>FUNCTION</scope>
    <scope>INTERACTION WITH HOST CADM1</scope>
</reference>
<sequence>MATYEVLCEVARKLGTDDREVVLFLLNVFIPQPTLAQLIGALRALKEEGRLTFPLLAECLFRAGRRDLLRDLLHLDPRFLERHLAGTMSYFSPYQLTVLHVDGELCARDIRSLIFLSKDTIGSRSTPQTFLHWVYCMENLDLLGPTDVDALMSMLRSLSRVDLQRQVQTLMGLHLSGPSHSQHYRHTP</sequence>
<gene>
    <name type="primary">ORF71</name>
</gene>
<name>VFLIP_HHV8P</name>
<comment type="function">
    <text evidence="2 3 4">Plays a role in the modulation of host signaling pathways by acting as an activator of both the classic and the alternative NF-kappa-B pathways. Thereby, initiates an important range of cellular processes to promote cell survival, proliferation and protection from apoptosis.</text>
</comment>
<comment type="subunit">
    <text evidence="2 3 4">Interacts with host RIPK1, TRAF2, MAP3K14, IKBKB, and IKBKG. Interacts with host CADM1; this interaction is essential for chronic NF-kappa-B activation.</text>
</comment>
<evidence type="ECO:0000255" key="1">
    <source>
        <dbReference type="PROSITE-ProRule" id="PRU00065"/>
    </source>
</evidence>
<evidence type="ECO:0000269" key="2">
    <source>
    </source>
</evidence>
<evidence type="ECO:0000269" key="3">
    <source>
    </source>
</evidence>
<evidence type="ECO:0000269" key="4">
    <source>
    </source>
</evidence>
<evidence type="ECO:0007829" key="5">
    <source>
        <dbReference type="PDB" id="5LDE"/>
    </source>
</evidence>